<sequence length="74" mass="8416">MAPPTTIRTRDQALAPLATLDSQTNCRLKELVQWECQFKGAEYVCSPFKRLFEHCIAPDKSATNYEVTDTYTNS</sequence>
<accession>Q05676</accession>
<accession>D3DLJ1</accession>
<reference key="1">
    <citation type="journal article" date="1996" name="Mol. Gen. Genet.">
        <title>SOM1, a small new gene required for mitochondrial inner membrane peptidase function in Saccharomyces cerevisiae.</title>
        <authorList>
            <person name="Esser K."/>
            <person name="Pratje E."/>
            <person name="Michaelis G."/>
        </authorList>
    </citation>
    <scope>NUCLEOTIDE SEQUENCE [GENOMIC DNA]</scope>
    <scope>FUNCTION</scope>
    <scope>IDENTIFICATION IN THE IMP COMPLEX</scope>
    <source>
        <strain>SC167</strain>
    </source>
</reference>
<reference key="2">
    <citation type="journal article" date="1997" name="Nature">
        <title>The nucleotide sequence of Saccharomyces cerevisiae chromosome V.</title>
        <authorList>
            <person name="Dietrich F.S."/>
            <person name="Mulligan J.T."/>
            <person name="Hennessy K.M."/>
            <person name="Yelton M.A."/>
            <person name="Allen E."/>
            <person name="Araujo R."/>
            <person name="Aviles E."/>
            <person name="Berno A."/>
            <person name="Brennan T."/>
            <person name="Carpenter J."/>
            <person name="Chen E."/>
            <person name="Cherry J.M."/>
            <person name="Chung E."/>
            <person name="Duncan M."/>
            <person name="Guzman E."/>
            <person name="Hartzell G."/>
            <person name="Hunicke-Smith S."/>
            <person name="Hyman R.W."/>
            <person name="Kayser A."/>
            <person name="Komp C."/>
            <person name="Lashkari D."/>
            <person name="Lew H."/>
            <person name="Lin D."/>
            <person name="Mosedale D."/>
            <person name="Nakahara K."/>
            <person name="Namath A."/>
            <person name="Norgren R."/>
            <person name="Oefner P."/>
            <person name="Oh C."/>
            <person name="Petel F.X."/>
            <person name="Roberts D."/>
            <person name="Sehl P."/>
            <person name="Schramm S."/>
            <person name="Shogren T."/>
            <person name="Smith V."/>
            <person name="Taylor P."/>
            <person name="Wei Y."/>
            <person name="Botstein D."/>
            <person name="Davis R.W."/>
        </authorList>
    </citation>
    <scope>NUCLEOTIDE SEQUENCE [LARGE SCALE GENOMIC DNA]</scope>
    <source>
        <strain>ATCC 204508 / S288c</strain>
    </source>
</reference>
<reference key="3">
    <citation type="journal article" date="2014" name="G3 (Bethesda)">
        <title>The reference genome sequence of Saccharomyces cerevisiae: Then and now.</title>
        <authorList>
            <person name="Engel S.R."/>
            <person name="Dietrich F.S."/>
            <person name="Fisk D.G."/>
            <person name="Binkley G."/>
            <person name="Balakrishnan R."/>
            <person name="Costanzo M.C."/>
            <person name="Dwight S.S."/>
            <person name="Hitz B.C."/>
            <person name="Karra K."/>
            <person name="Nash R.S."/>
            <person name="Weng S."/>
            <person name="Wong E.D."/>
            <person name="Lloyd P."/>
            <person name="Skrzypek M.S."/>
            <person name="Miyasato S.R."/>
            <person name="Simison M."/>
            <person name="Cherry J.M."/>
        </authorList>
    </citation>
    <scope>GENOME REANNOTATION</scope>
    <source>
        <strain>ATCC 204508 / S288c</strain>
    </source>
</reference>
<reference key="4">
    <citation type="journal article" date="2007" name="Genome Res.">
        <title>Approaching a complete repository of sequence-verified protein-encoding clones for Saccharomyces cerevisiae.</title>
        <authorList>
            <person name="Hu Y."/>
            <person name="Rolfs A."/>
            <person name="Bhullar B."/>
            <person name="Murthy T.V.S."/>
            <person name="Zhu C."/>
            <person name="Berger M.F."/>
            <person name="Camargo A.A."/>
            <person name="Kelley F."/>
            <person name="McCarron S."/>
            <person name="Jepson D."/>
            <person name="Richardson A."/>
            <person name="Raphael J."/>
            <person name="Moreira D."/>
            <person name="Taycher E."/>
            <person name="Zuo D."/>
            <person name="Mohr S."/>
            <person name="Kane M.F."/>
            <person name="Williamson J."/>
            <person name="Simpson A.J.G."/>
            <person name="Bulyk M.L."/>
            <person name="Harlow E."/>
            <person name="Marsischky G."/>
            <person name="Kolodner R.D."/>
            <person name="LaBaer J."/>
        </authorList>
    </citation>
    <scope>NUCLEOTIDE SEQUENCE [GENOMIC DNA]</scope>
    <source>
        <strain>ATCC 204508 / S288c</strain>
    </source>
</reference>
<reference key="5">
    <citation type="journal article" date="2003" name="Nature">
        <title>Global analysis of protein expression in yeast.</title>
        <authorList>
            <person name="Ghaemmaghami S."/>
            <person name="Huh W.-K."/>
            <person name="Bower K."/>
            <person name="Howson R.W."/>
            <person name="Belle A."/>
            <person name="Dephoure N."/>
            <person name="O'Shea E.K."/>
            <person name="Weissman J.S."/>
        </authorList>
    </citation>
    <scope>LEVEL OF PROTEIN EXPRESSION [LARGE SCALE ANALYSIS]</scope>
</reference>
<reference key="6">
    <citation type="journal article" date="2004" name="J. Biol. Chem.">
        <title>Cargo sequences are important for Som1p-dependent signal peptide cleavage in yeast mitochondria.</title>
        <authorList>
            <person name="Liang H."/>
            <person name="Luo W."/>
            <person name="Green N."/>
            <person name="Fang H."/>
        </authorList>
    </citation>
    <scope>FUNCTION</scope>
</reference>
<proteinExistence type="evidence at protein level"/>
<organism>
    <name type="scientific">Saccharomyces cerevisiae (strain ATCC 204508 / S288c)</name>
    <name type="common">Baker's yeast</name>
    <dbReference type="NCBI Taxonomy" id="559292"/>
    <lineage>
        <taxon>Eukaryota</taxon>
        <taxon>Fungi</taxon>
        <taxon>Dikarya</taxon>
        <taxon>Ascomycota</taxon>
        <taxon>Saccharomycotina</taxon>
        <taxon>Saccharomycetes</taxon>
        <taxon>Saccharomycetales</taxon>
        <taxon>Saccharomycetaceae</taxon>
        <taxon>Saccharomyces</taxon>
    </lineage>
</organism>
<evidence type="ECO:0000255" key="1"/>
<evidence type="ECO:0000269" key="2">
    <source>
    </source>
</evidence>
<evidence type="ECO:0000269" key="3">
    <source>
    </source>
</evidence>
<evidence type="ECO:0000269" key="4">
    <source>
    </source>
</evidence>
<evidence type="ECO:0000305" key="5"/>
<keyword id="KW-0472">Membrane</keyword>
<keyword id="KW-0496">Mitochondrion</keyword>
<keyword id="KW-0999">Mitochondrion inner membrane</keyword>
<keyword id="KW-1185">Reference proteome</keyword>
<keyword id="KW-0809">Transit peptide</keyword>
<feature type="transit peptide" description="Mitochondrion" evidence="1">
    <location>
        <begin position="1"/>
        <end status="unknown"/>
    </location>
</feature>
<feature type="chain" id="PRO_0000022385" description="Protein SOM1, mitochondrial">
    <location>
        <begin status="unknown"/>
        <end position="74"/>
    </location>
</feature>
<gene>
    <name type="primary">SOM1</name>
    <name type="ordered locus">YEL059C-A</name>
    <name type="ORF">YEL059BC</name>
</gene>
<protein>
    <recommendedName>
        <fullName>Protein SOM1, mitochondrial</fullName>
    </recommendedName>
    <alternativeName>
        <fullName>Mitochondrial inner membrane protease subunit SOM1</fullName>
    </alternativeName>
</protein>
<dbReference type="EMBL" id="X90459">
    <property type="protein sequence ID" value="CAA62083.1"/>
    <property type="molecule type" value="Genomic_DNA"/>
</dbReference>
<dbReference type="EMBL" id="U18795">
    <property type="protein sequence ID" value="AAB65036.1"/>
    <property type="molecule type" value="Genomic_DNA"/>
</dbReference>
<dbReference type="EMBL" id="AY558445">
    <property type="protein sequence ID" value="AAS56771.1"/>
    <property type="molecule type" value="Genomic_DNA"/>
</dbReference>
<dbReference type="EMBL" id="BK006939">
    <property type="protein sequence ID" value="DAA07595.1"/>
    <property type="molecule type" value="Genomic_DNA"/>
</dbReference>
<dbReference type="PIR" id="S72624">
    <property type="entry name" value="S72624"/>
</dbReference>
<dbReference type="RefSeq" id="NP_058154.3">
    <property type="nucleotide sequence ID" value="NM_001180854.3"/>
</dbReference>
<dbReference type="BioGRID" id="36670">
    <property type="interactions" value="227"/>
</dbReference>
<dbReference type="ComplexPortal" id="CPX-1892">
    <property type="entry name" value="Mitochondrial inner membrane peptidase complex"/>
</dbReference>
<dbReference type="FunCoup" id="Q05676">
    <property type="interactions" value="48"/>
</dbReference>
<dbReference type="IntAct" id="Q05676">
    <property type="interactions" value="1"/>
</dbReference>
<dbReference type="STRING" id="4932.YEL059C-A"/>
<dbReference type="TCDB" id="9.B.391.1.1">
    <property type="family name" value="the eukaryotic inner membrane peptidase complex (impc) family"/>
</dbReference>
<dbReference type="iPTMnet" id="Q05676"/>
<dbReference type="PaxDb" id="4932-YEL059C-A"/>
<dbReference type="PeptideAtlas" id="Q05676"/>
<dbReference type="EnsemblFungi" id="YEL059C-A_mRNA">
    <property type="protein sequence ID" value="YEL059C-A"/>
    <property type="gene ID" value="YEL059C-A"/>
</dbReference>
<dbReference type="GeneID" id="856650"/>
<dbReference type="KEGG" id="sce:YEL059C-A"/>
<dbReference type="AGR" id="SGD:S000002954"/>
<dbReference type="SGD" id="S000002954">
    <property type="gene designation" value="SOM1"/>
</dbReference>
<dbReference type="VEuPathDB" id="FungiDB:YEL059C-A"/>
<dbReference type="eggNOG" id="ENOG502SBH3">
    <property type="taxonomic scope" value="Eukaryota"/>
</dbReference>
<dbReference type="HOGENOM" id="CLU_160156_0_0_1"/>
<dbReference type="InParanoid" id="Q05676"/>
<dbReference type="OMA" id="NECHFDG"/>
<dbReference type="OrthoDB" id="3983163at2759"/>
<dbReference type="BioCyc" id="YEAST:G3O-30351-MONOMER"/>
<dbReference type="BioGRID-ORCS" id="856650">
    <property type="hits" value="10 hits in 10 CRISPR screens"/>
</dbReference>
<dbReference type="PRO" id="PR:Q05676"/>
<dbReference type="Proteomes" id="UP000002311">
    <property type="component" value="Chromosome V"/>
</dbReference>
<dbReference type="RNAct" id="Q05676">
    <property type="molecule type" value="protein"/>
</dbReference>
<dbReference type="GO" id="GO:0005743">
    <property type="term" value="C:mitochondrial inner membrane"/>
    <property type="evidence" value="ECO:0000314"/>
    <property type="project" value="SGD"/>
</dbReference>
<dbReference type="GO" id="GO:0042720">
    <property type="term" value="C:mitochondrial inner membrane peptidase complex"/>
    <property type="evidence" value="ECO:0000353"/>
    <property type="project" value="SGD"/>
</dbReference>
<dbReference type="GO" id="GO:0033108">
    <property type="term" value="P:mitochondrial respiratory chain complex assembly"/>
    <property type="evidence" value="ECO:0000315"/>
    <property type="project" value="SGD"/>
</dbReference>
<dbReference type="GO" id="GO:0006465">
    <property type="term" value="P:signal peptide processing"/>
    <property type="evidence" value="ECO:0000303"/>
    <property type="project" value="ComplexPortal"/>
</dbReference>
<dbReference type="InterPro" id="IPR024645">
    <property type="entry name" value="Mitochondr_Som1"/>
</dbReference>
<dbReference type="Pfam" id="PF11093">
    <property type="entry name" value="Mitochondr_Som1"/>
    <property type="match status" value="1"/>
</dbReference>
<comment type="function">
    <text evidence="3 4">Non-catalytic component of the mitochondrial inner membrane peptidase (IMP) complex. IMP catalyzes the removal of signal peptides required for the targeting of proteins from the mitochondrial matrix, across the inner membrane, into the inter-membrane space. SOM1 facilitates cleavage of a subset of IMP substrates.</text>
</comment>
<comment type="subunit">
    <text evidence="4">Component of the mitochondrial inner membrane peptidase (IMP) complex which at least consists of IMP1, IMP2 and SOM1.</text>
</comment>
<comment type="subcellular location">
    <subcellularLocation>
        <location evidence="5">Mitochondrion inner membrane</location>
    </subcellularLocation>
</comment>
<comment type="miscellaneous">
    <text evidence="2">Present with 358 molecules/cell in log phase SD medium.</text>
</comment>
<name>SOM1_YEAST</name>